<name>F16PC_CLOD6</name>
<protein>
    <recommendedName>
        <fullName evidence="1">Fructose-1,6-bisphosphatase class 3</fullName>
        <shortName evidence="1">FBPase class 3</shortName>
        <ecNumber evidence="1">3.1.3.11</ecNumber>
    </recommendedName>
    <alternativeName>
        <fullName evidence="1">D-fructose-1,6-bisphosphate 1-phosphohydrolase class 3</fullName>
    </alternativeName>
</protein>
<comment type="catalytic activity">
    <reaction evidence="1">
        <text>beta-D-fructose 1,6-bisphosphate + H2O = beta-D-fructose 6-phosphate + phosphate</text>
        <dbReference type="Rhea" id="RHEA:11064"/>
        <dbReference type="ChEBI" id="CHEBI:15377"/>
        <dbReference type="ChEBI" id="CHEBI:32966"/>
        <dbReference type="ChEBI" id="CHEBI:43474"/>
        <dbReference type="ChEBI" id="CHEBI:57634"/>
        <dbReference type="EC" id="3.1.3.11"/>
    </reaction>
</comment>
<comment type="cofactor">
    <cofactor evidence="1">
        <name>Mn(2+)</name>
        <dbReference type="ChEBI" id="CHEBI:29035"/>
    </cofactor>
</comment>
<comment type="pathway">
    <text evidence="1">Carbohydrate biosynthesis; gluconeogenesis.</text>
</comment>
<comment type="similarity">
    <text evidence="1">Belongs to the FBPase class 3 family.</text>
</comment>
<organism>
    <name type="scientific">Clostridioides difficile (strain 630)</name>
    <name type="common">Peptoclostridium difficile</name>
    <dbReference type="NCBI Taxonomy" id="272563"/>
    <lineage>
        <taxon>Bacteria</taxon>
        <taxon>Bacillati</taxon>
        <taxon>Bacillota</taxon>
        <taxon>Clostridia</taxon>
        <taxon>Peptostreptococcales</taxon>
        <taxon>Peptostreptococcaceae</taxon>
        <taxon>Clostridioides</taxon>
    </lineage>
</organism>
<accession>Q18B55</accession>
<feature type="chain" id="PRO_0000363087" description="Fructose-1,6-bisphosphatase class 3">
    <location>
        <begin position="1"/>
        <end position="661"/>
    </location>
</feature>
<proteinExistence type="inferred from homology"/>
<keyword id="KW-0119">Carbohydrate metabolism</keyword>
<keyword id="KW-0378">Hydrolase</keyword>
<keyword id="KW-0464">Manganese</keyword>
<keyword id="KW-1185">Reference proteome</keyword>
<sequence length="661" mass="76452">MKNLCKISDDYLNSKLKYLKLLSKQYPSISKASTEIINLEAILNLPKGTEHFITDVHGEYEPFVHVLKNGSGVIKRKIEELFSNTIRDSEKKMLATLVYYPEQKLDLIIKQEENIDDFYRINIYRLIELCKYASSKYTRSKVRKLLPENFKYIIEELLHEHVKSEHKEEYYKSIVETIVDIGIAKEFIIAISTVIQKLVVDRLHVIGDIYDRGPRPDIIVDKLIEHHCVDIQWGNHDILWMGAASGEKTCIANALRISARYANLDIVEDIYGINLLPLATFAIEMYKDDPCKEFIPKVNDQSVTTTEKSLMAKMHKAISIIQFKLEGEVIRRRPEFEMEHRLLLNMINYDEGTINLKGKTYKLKDTYLPTIDKKDPYKLTMEERNVIDKLVSSFRGSEKLQKHVSFLFSKGSIYLKANSNLLIHGCVPLNEDGSFMSMNIMGKEYKGKALMDKMESLAREGFFFKDKAEEKLYGMDIMWYLWTGKCSSLFGKDDMTTFERYFIAEKETHKENKNPYFKLRENEMACKRLFEEFDLELDESHIINGHVPVESKNGESPIKANGKILVIDGGFSRAYQKTTGIAGYTLIYNSRTLQLVSHEPFNSAEEAIANESDILSTTVVVEHKAKRKMVRDTDEGIKIQEEIEDLKLLLMAYKKGLIKEM</sequence>
<gene>
    <name evidence="1" type="primary">fbp</name>
    <name type="ordered locus">CD630_11910</name>
</gene>
<reference key="1">
    <citation type="journal article" date="2006" name="Nat. Genet.">
        <title>The multidrug-resistant human pathogen Clostridium difficile has a highly mobile, mosaic genome.</title>
        <authorList>
            <person name="Sebaihia M."/>
            <person name="Wren B.W."/>
            <person name="Mullany P."/>
            <person name="Fairweather N.F."/>
            <person name="Minton N."/>
            <person name="Stabler R."/>
            <person name="Thomson N.R."/>
            <person name="Roberts A.P."/>
            <person name="Cerdeno-Tarraga A.M."/>
            <person name="Wang H."/>
            <person name="Holden M.T.G."/>
            <person name="Wright A."/>
            <person name="Churcher C."/>
            <person name="Quail M.A."/>
            <person name="Baker S."/>
            <person name="Bason N."/>
            <person name="Brooks K."/>
            <person name="Chillingworth T."/>
            <person name="Cronin A."/>
            <person name="Davis P."/>
            <person name="Dowd L."/>
            <person name="Fraser A."/>
            <person name="Feltwell T."/>
            <person name="Hance Z."/>
            <person name="Holroyd S."/>
            <person name="Jagels K."/>
            <person name="Moule S."/>
            <person name="Mungall K."/>
            <person name="Price C."/>
            <person name="Rabbinowitsch E."/>
            <person name="Sharp S."/>
            <person name="Simmonds M."/>
            <person name="Stevens K."/>
            <person name="Unwin L."/>
            <person name="Whithead S."/>
            <person name="Dupuy B."/>
            <person name="Dougan G."/>
            <person name="Barrell B."/>
            <person name="Parkhill J."/>
        </authorList>
    </citation>
    <scope>NUCLEOTIDE SEQUENCE [LARGE SCALE GENOMIC DNA]</scope>
    <source>
        <strain>630</strain>
    </source>
</reference>
<evidence type="ECO:0000255" key="1">
    <source>
        <dbReference type="HAMAP-Rule" id="MF_01854"/>
    </source>
</evidence>
<dbReference type="EC" id="3.1.3.11" evidence="1"/>
<dbReference type="EMBL" id="AM180355">
    <property type="protein sequence ID" value="CAJ68045.1"/>
    <property type="molecule type" value="Genomic_DNA"/>
</dbReference>
<dbReference type="RefSeq" id="WP_003438115.1">
    <property type="nucleotide sequence ID" value="NZ_JAUPES010000024.1"/>
</dbReference>
<dbReference type="RefSeq" id="YP_001087684.1">
    <property type="nucleotide sequence ID" value="NC_009089.1"/>
</dbReference>
<dbReference type="STRING" id="272563.CD630_11910"/>
<dbReference type="EnsemblBacteria" id="CAJ68045">
    <property type="protein sequence ID" value="CAJ68045"/>
    <property type="gene ID" value="CD630_11910"/>
</dbReference>
<dbReference type="KEGG" id="cdf:CD630_11910"/>
<dbReference type="KEGG" id="pdc:CDIF630_01340"/>
<dbReference type="PATRIC" id="fig|272563.120.peg.1242"/>
<dbReference type="eggNOG" id="COG3855">
    <property type="taxonomic scope" value="Bacteria"/>
</dbReference>
<dbReference type="OrthoDB" id="9779903at2"/>
<dbReference type="PhylomeDB" id="Q18B55"/>
<dbReference type="BioCyc" id="PDIF272563:G12WB-1322-MONOMER"/>
<dbReference type="UniPathway" id="UPA00138"/>
<dbReference type="Proteomes" id="UP000001978">
    <property type="component" value="Chromosome"/>
</dbReference>
<dbReference type="GO" id="GO:0042132">
    <property type="term" value="F:fructose 1,6-bisphosphate 1-phosphatase activity"/>
    <property type="evidence" value="ECO:0007669"/>
    <property type="project" value="UniProtKB-UniRule"/>
</dbReference>
<dbReference type="GO" id="GO:0006094">
    <property type="term" value="P:gluconeogenesis"/>
    <property type="evidence" value="ECO:0007669"/>
    <property type="project" value="UniProtKB-UniRule"/>
</dbReference>
<dbReference type="Gene3D" id="3.60.21.10">
    <property type="match status" value="1"/>
</dbReference>
<dbReference type="HAMAP" id="MF_01854">
    <property type="entry name" value="FBPase_class3"/>
    <property type="match status" value="1"/>
</dbReference>
<dbReference type="InterPro" id="IPR009164">
    <property type="entry name" value="FBPtase_class3"/>
</dbReference>
<dbReference type="InterPro" id="IPR029052">
    <property type="entry name" value="Metallo-depent_PP-like"/>
</dbReference>
<dbReference type="Pfam" id="PF06874">
    <property type="entry name" value="FBPase_2"/>
    <property type="match status" value="1"/>
</dbReference>
<dbReference type="PIRSF" id="PIRSF000906">
    <property type="entry name" value="FBPtase_Bacill"/>
    <property type="match status" value="1"/>
</dbReference>
<dbReference type="SUPFAM" id="SSF56300">
    <property type="entry name" value="Metallo-dependent phosphatases"/>
    <property type="match status" value="2"/>
</dbReference>